<organism>
    <name type="scientific">Mus musculus</name>
    <name type="common">Mouse</name>
    <dbReference type="NCBI Taxonomy" id="10090"/>
    <lineage>
        <taxon>Eukaryota</taxon>
        <taxon>Metazoa</taxon>
        <taxon>Chordata</taxon>
        <taxon>Craniata</taxon>
        <taxon>Vertebrata</taxon>
        <taxon>Euteleostomi</taxon>
        <taxon>Mammalia</taxon>
        <taxon>Eutheria</taxon>
        <taxon>Euarchontoglires</taxon>
        <taxon>Glires</taxon>
        <taxon>Rodentia</taxon>
        <taxon>Myomorpha</taxon>
        <taxon>Muroidea</taxon>
        <taxon>Muridae</taxon>
        <taxon>Murinae</taxon>
        <taxon>Mus</taxon>
        <taxon>Mus</taxon>
    </lineage>
</organism>
<keyword id="KW-0963">Cytoplasm</keyword>
<keyword id="KW-0206">Cytoskeleton</keyword>
<keyword id="KW-0342">GTP-binding</keyword>
<keyword id="KW-0493">Microtubule</keyword>
<keyword id="KW-0547">Nucleotide-binding</keyword>
<keyword id="KW-0597">Phosphoprotein</keyword>
<keyword id="KW-1185">Reference proteome</keyword>
<accession>Q8VCK3</accession>
<feature type="chain" id="PRO_0000048469" description="Tubulin gamma-2 chain">
    <location>
        <begin position="1"/>
        <end position="451"/>
    </location>
</feature>
<feature type="binding site" evidence="2">
    <location>
        <begin position="142"/>
        <end position="148"/>
    </location>
    <ligand>
        <name>GTP</name>
        <dbReference type="ChEBI" id="CHEBI:37565"/>
    </ligand>
</feature>
<feature type="modified residue" description="Phosphoserine; by BRSK1" evidence="3">
    <location>
        <position position="131"/>
    </location>
</feature>
<feature type="mutagenesis site" description="Weak effect possibly due to low expression of this mutant." evidence="3">
    <original>S</original>
    <variation>A</variation>
    <location>
        <position position="131"/>
    </location>
</feature>
<feature type="mutagenesis site" description="Phosphomimetic mutant that lead to increased centrosome number." evidence="3">
    <original>S</original>
    <variation>D</variation>
    <location>
        <position position="131"/>
    </location>
</feature>
<evidence type="ECO:0000250" key="1">
    <source>
        <dbReference type="UniProtKB" id="Q9NRH3"/>
    </source>
</evidence>
<evidence type="ECO:0000255" key="2"/>
<evidence type="ECO:0000269" key="3">
    <source>
    </source>
</evidence>
<evidence type="ECO:0000305" key="4"/>
<gene>
    <name type="primary">Tubg2</name>
</gene>
<reference key="1">
    <citation type="journal article" date="2004" name="Genome Res.">
        <title>The status, quality, and expansion of the NIH full-length cDNA project: the Mammalian Gene Collection (MGC).</title>
        <authorList>
            <consortium name="The MGC Project Team"/>
        </authorList>
    </citation>
    <scope>NUCLEOTIDE SEQUENCE [LARGE SCALE MRNA]</scope>
    <source>
        <tissue>Retina</tissue>
    </source>
</reference>
<reference key="2">
    <citation type="journal article" date="2009" name="Nat. Cell Biol.">
        <title>SADB phosphorylation of gamma-tubulin regulates centrosome duplication.</title>
        <authorList>
            <person name="Alvarado-Kristensson M."/>
            <person name="Rodriguez M.J."/>
            <person name="Silio V."/>
            <person name="Valpuesta J.M."/>
            <person name="Carrera A.C."/>
        </authorList>
    </citation>
    <scope>SUBCELLULAR LOCATION</scope>
    <scope>PHOSPHORYLATION AT SER-131</scope>
    <scope>MUTAGENESIS OF SER-131</scope>
</reference>
<dbReference type="EMBL" id="BC019652">
    <property type="protein sequence ID" value="AAH19652.1"/>
    <property type="molecule type" value="mRNA"/>
</dbReference>
<dbReference type="EMBL" id="BC051439">
    <property type="protein sequence ID" value="AAH51439.1"/>
    <property type="molecule type" value="mRNA"/>
</dbReference>
<dbReference type="CCDS" id="CCDS25452.1"/>
<dbReference type="RefSeq" id="NP_598789.1">
    <property type="nucleotide sequence ID" value="NM_134028.2"/>
</dbReference>
<dbReference type="SMR" id="Q8VCK3"/>
<dbReference type="BioGRID" id="222159">
    <property type="interactions" value="4"/>
</dbReference>
<dbReference type="FunCoup" id="Q8VCK3">
    <property type="interactions" value="1287"/>
</dbReference>
<dbReference type="IntAct" id="Q8VCK3">
    <property type="interactions" value="2"/>
</dbReference>
<dbReference type="MINT" id="Q8VCK3"/>
<dbReference type="STRING" id="10090.ENSMUSP00000045901"/>
<dbReference type="iPTMnet" id="Q8VCK3"/>
<dbReference type="PhosphoSitePlus" id="Q8VCK3"/>
<dbReference type="REPRODUCTION-2DPAGE" id="Q8VCK3"/>
<dbReference type="PaxDb" id="10090-ENSMUSP00000045901"/>
<dbReference type="ProteomicsDB" id="262951"/>
<dbReference type="Pumba" id="Q8VCK3"/>
<dbReference type="Antibodypedia" id="29321">
    <property type="antibodies" value="75 antibodies from 22 providers"/>
</dbReference>
<dbReference type="Ensembl" id="ENSMUST00000043654.10">
    <property type="protein sequence ID" value="ENSMUSP00000045901.10"/>
    <property type="gene ID" value="ENSMUSG00000045007.10"/>
</dbReference>
<dbReference type="GeneID" id="103768"/>
<dbReference type="KEGG" id="mmu:103768"/>
<dbReference type="UCSC" id="uc007lnm.2">
    <property type="organism name" value="mouse"/>
</dbReference>
<dbReference type="AGR" id="MGI:2144208"/>
<dbReference type="CTD" id="27175"/>
<dbReference type="MGI" id="MGI:2144208">
    <property type="gene designation" value="Tubg2"/>
</dbReference>
<dbReference type="VEuPathDB" id="HostDB:ENSMUSG00000045007"/>
<dbReference type="eggNOG" id="KOG1374">
    <property type="taxonomic scope" value="Eukaryota"/>
</dbReference>
<dbReference type="GeneTree" id="ENSGT00940000162499"/>
<dbReference type="HOGENOM" id="CLU_015718_1_0_1"/>
<dbReference type="InParanoid" id="Q8VCK3"/>
<dbReference type="OMA" id="QTYSIFP"/>
<dbReference type="OrthoDB" id="10249382at2759"/>
<dbReference type="PhylomeDB" id="Q8VCK3"/>
<dbReference type="TreeFam" id="TF300477"/>
<dbReference type="Reactome" id="R-MMU-380270">
    <property type="pathway name" value="Recruitment of mitotic centrosome proteins and complexes"/>
</dbReference>
<dbReference type="Reactome" id="R-MMU-380320">
    <property type="pathway name" value="Recruitment of NuMA to mitotic centrosomes"/>
</dbReference>
<dbReference type="BioGRID-ORCS" id="103768">
    <property type="hits" value="3 hits in 77 CRISPR screens"/>
</dbReference>
<dbReference type="ChiTaRS" id="Tubg2">
    <property type="organism name" value="mouse"/>
</dbReference>
<dbReference type="PRO" id="PR:Q8VCK3"/>
<dbReference type="Proteomes" id="UP000000589">
    <property type="component" value="Chromosome 11"/>
</dbReference>
<dbReference type="RNAct" id="Q8VCK3">
    <property type="molecule type" value="protein"/>
</dbReference>
<dbReference type="Bgee" id="ENSMUSG00000045007">
    <property type="expression patterns" value="Expressed in submandibular gland primordium and 135 other cell types or tissues"/>
</dbReference>
<dbReference type="ExpressionAtlas" id="Q8VCK3">
    <property type="expression patterns" value="baseline and differential"/>
</dbReference>
<dbReference type="GO" id="GO:0005813">
    <property type="term" value="C:centrosome"/>
    <property type="evidence" value="ECO:0000314"/>
    <property type="project" value="MGI"/>
</dbReference>
<dbReference type="GO" id="GO:0005881">
    <property type="term" value="C:cytoplasmic microtubule"/>
    <property type="evidence" value="ECO:0000314"/>
    <property type="project" value="MGI"/>
</dbReference>
<dbReference type="GO" id="GO:0000930">
    <property type="term" value="C:gamma-tubulin complex"/>
    <property type="evidence" value="ECO:0007669"/>
    <property type="project" value="InterPro"/>
</dbReference>
<dbReference type="GO" id="GO:0000242">
    <property type="term" value="C:pericentriolar material"/>
    <property type="evidence" value="ECO:0000314"/>
    <property type="project" value="MGI"/>
</dbReference>
<dbReference type="GO" id="GO:0005876">
    <property type="term" value="C:spindle microtubule"/>
    <property type="evidence" value="ECO:0000314"/>
    <property type="project" value="MGI"/>
</dbReference>
<dbReference type="GO" id="GO:0005525">
    <property type="term" value="F:GTP binding"/>
    <property type="evidence" value="ECO:0007669"/>
    <property type="project" value="UniProtKB-KW"/>
</dbReference>
<dbReference type="GO" id="GO:0031122">
    <property type="term" value="P:cytoplasmic microtubule organization"/>
    <property type="evidence" value="ECO:0007669"/>
    <property type="project" value="InterPro"/>
</dbReference>
<dbReference type="GO" id="GO:0007020">
    <property type="term" value="P:microtubule nucleation"/>
    <property type="evidence" value="ECO:0007669"/>
    <property type="project" value="InterPro"/>
</dbReference>
<dbReference type="CDD" id="cd02188">
    <property type="entry name" value="gamma_tubulin"/>
    <property type="match status" value="1"/>
</dbReference>
<dbReference type="FunFam" id="1.10.287.600:FF:000004">
    <property type="entry name" value="Tubulin gamma chain"/>
    <property type="match status" value="1"/>
</dbReference>
<dbReference type="FunFam" id="3.30.1330.20:FF:000003">
    <property type="entry name" value="Tubulin gamma chain"/>
    <property type="match status" value="1"/>
</dbReference>
<dbReference type="FunFam" id="3.40.50.1440:FF:000010">
    <property type="entry name" value="Tubulin gamma chain"/>
    <property type="match status" value="1"/>
</dbReference>
<dbReference type="Gene3D" id="1.10.287.600">
    <property type="entry name" value="Helix hairpin bin"/>
    <property type="match status" value="1"/>
</dbReference>
<dbReference type="Gene3D" id="3.30.1330.20">
    <property type="entry name" value="Tubulin/FtsZ, C-terminal domain"/>
    <property type="match status" value="1"/>
</dbReference>
<dbReference type="Gene3D" id="3.40.50.1440">
    <property type="entry name" value="Tubulin/FtsZ, GTPase domain"/>
    <property type="match status" value="1"/>
</dbReference>
<dbReference type="InterPro" id="IPR002454">
    <property type="entry name" value="Gamma_tubulin"/>
</dbReference>
<dbReference type="InterPro" id="IPR008280">
    <property type="entry name" value="Tub_FtsZ_C"/>
</dbReference>
<dbReference type="InterPro" id="IPR000217">
    <property type="entry name" value="Tubulin"/>
</dbReference>
<dbReference type="InterPro" id="IPR037103">
    <property type="entry name" value="Tubulin/FtsZ-like_C"/>
</dbReference>
<dbReference type="InterPro" id="IPR018316">
    <property type="entry name" value="Tubulin/FtsZ_2-layer-sand-dom"/>
</dbReference>
<dbReference type="InterPro" id="IPR036525">
    <property type="entry name" value="Tubulin/FtsZ_GTPase_sf"/>
</dbReference>
<dbReference type="InterPro" id="IPR023123">
    <property type="entry name" value="Tubulin_C"/>
</dbReference>
<dbReference type="InterPro" id="IPR017975">
    <property type="entry name" value="Tubulin_CS"/>
</dbReference>
<dbReference type="InterPro" id="IPR003008">
    <property type="entry name" value="Tubulin_FtsZ_GTPase"/>
</dbReference>
<dbReference type="PANTHER" id="PTHR11588">
    <property type="entry name" value="TUBULIN"/>
    <property type="match status" value="1"/>
</dbReference>
<dbReference type="Pfam" id="PF00091">
    <property type="entry name" value="Tubulin"/>
    <property type="match status" value="1"/>
</dbReference>
<dbReference type="Pfam" id="PF03953">
    <property type="entry name" value="Tubulin_C"/>
    <property type="match status" value="1"/>
</dbReference>
<dbReference type="PRINTS" id="PR01164">
    <property type="entry name" value="GAMMATUBULIN"/>
</dbReference>
<dbReference type="PRINTS" id="PR01161">
    <property type="entry name" value="TUBULIN"/>
</dbReference>
<dbReference type="SMART" id="SM00864">
    <property type="entry name" value="Tubulin"/>
    <property type="match status" value="1"/>
</dbReference>
<dbReference type="SMART" id="SM00865">
    <property type="entry name" value="Tubulin_C"/>
    <property type="match status" value="1"/>
</dbReference>
<dbReference type="SUPFAM" id="SSF55307">
    <property type="entry name" value="Tubulin C-terminal domain-like"/>
    <property type="match status" value="1"/>
</dbReference>
<dbReference type="SUPFAM" id="SSF52490">
    <property type="entry name" value="Tubulin nucleotide-binding domain-like"/>
    <property type="match status" value="1"/>
</dbReference>
<dbReference type="PROSITE" id="PS00227">
    <property type="entry name" value="TUBULIN"/>
    <property type="match status" value="1"/>
</dbReference>
<sequence>MPREIITLQLGQCGNQIGFEFWKQLCAEHGISPEGIVEEFATEGTDRKDVFFYQADDEHYIPRAVLLDLEPRVIHSILNSSYAKLYNPENIYLSEHGGGAGNNWGRGFSQGEKIHEDIFDIIDREADGSDSLEGFVLCHSIAGGTGSGLGSYLLERLNDRYPKKLVQTYSVFPNQDEMSDVVVQPYNSLLTLKRLTQNADCVVVLDNTALNRIATDRLHIQNPSFSQINQLVSTIMSASTTTLRYPGYMNNDLIGLIASLIPTPRLHFLMTGYTPLTTDQSVASVRKTTVLDVMRRLLQPKNVMVSTGRDRQTNHCYIAILNIIQGEVDPTQVHKSLQRIRERKLANFIPWGPASIQVALSRKSPYLPSAHRVSGLMMANHTSISSLFESSCQQYDKLWKRGAFLEQFRKEDIFKDNFEEMHRSREVVQELIDEYHAATRPDYISWGTQEQ</sequence>
<name>TBG2_MOUSE</name>
<protein>
    <recommendedName>
        <fullName>Tubulin gamma-2 chain</fullName>
    </recommendedName>
    <alternativeName>
        <fullName>Gamma-2-tubulin</fullName>
    </alternativeName>
</protein>
<proteinExistence type="evidence at protein level"/>
<comment type="function">
    <text evidence="1">Tubulin is the major constituent of microtubules, protein filaments consisting of alpha- and beta-tubulin heterodimers (By similarity). Gamma-tubulin is a key component of the gamma-tubulin ring complex (gTuRC) which mediates microtubule nucleation (By similarity). The gTuRC regulates the minus-end nucleation of alpha-beta tubulin heterodimers that grow into microtubule protafilaments, a critical step in centrosome duplication and spindle formation (By similarity).</text>
</comment>
<comment type="subunit">
    <text evidence="1">Component of the gamma-tubulin ring complex (gTuRC) consisting of TUBGCP2, TUBGCP3, TUBGCP4, TUBGCP5 and TUBGCP6 and gamma-tubulin TUBG1 or TUBG2 (By similarity). TUBGCP2, TUBGCP3, TUBGCP4, TUBGCP5 and TUBGCP6 assemble in a 5:5:2:1:1 stoichiometry; each is associated with a gamma-tubulin, thereby arranging 14 gamma-tubulins in a helical manner (By similarity). Gamma-tubulin at the first position is blocked by TUBGCP3 at the last position, allowing 13 protafilaments to grow into a microtubule (By similarity). Interacts with alpha-beta tubulin heterodimers; the interaction allows microtubules to nucleate from the gTuRC (By similarity).</text>
</comment>
<comment type="subcellular location">
    <subcellularLocation>
        <location evidence="3">Cytoplasm</location>
        <location evidence="3">Cytoskeleton</location>
        <location evidence="3">Microtubule organizing center</location>
        <location evidence="3">Centrosome</location>
    </subcellularLocation>
    <text>Mainly localizes to the centrosome, but a fraction is found outside of the centrosome in the cytoplasm.</text>
</comment>
<comment type="PTM">
    <text evidence="3">Phosphorylation at Ser-131 by BRSK1 regulates centrosome duplication, possibly by mediating relocation of gamma-tubulin and its associated proteins from the cytoplasm to the centrosome.</text>
</comment>
<comment type="similarity">
    <text evidence="4">Belongs to the tubulin family.</text>
</comment>